<gene>
    <name evidence="1" type="primary">aspS</name>
    <name type="ordered locus">Msil_0209</name>
</gene>
<sequence>MHRYRSHTCGDLRETDALQPTRLSGWCHRIRDHGGVLFIDLRDHYGITQCVVDPDSGAFPLAEKLRSEWVVRIDGLVRQRPAGTENIEMPTGLIEVYVTEIEVLGAAAELPLPVFGDQNYPEDMRLRYRFLDLRREKLHNNIMLRGRVIDSLRARMKGQGFFEFQTPILTASSPEGARDFLVPSRLHPGKFYALPQAPQQFKQLLMTAGFDRYFQIAPCFRDEDLRADRSLEFYQLDIEMSFVTQEDIFATVEPVLRGVFEEFGEGFAVTPEFPRIPYAETMLKYGTDKPDLRNPLVIVDVTEEFSREDVSFNAFKNVIKQGGVVRAIPAPGAGAQPRSFFDKLNDWARGEGAAGLGYVIFEGDAGALVGKGPIAKFLPADVQQAIAAKAGLKSGDAVFFACDRPDRAAKLAGAARLRIGSELKLSKTGVFELCWIVDFPMYEWNEDEKRIDFSHNPFSMPNCNLEQFLALETGVREEIVGIDRGERNRDLNESNELRKRILEITAFQYDVVCNGFELSSGAIRNHRPDIMRKAFALAGYDETVLEQKFGGMYRAFHYGAPPHGGIAPGVDRIVMLLAGEENLREIVAFPMNQRGEDLLLGAPSNVTAKQLRELSIKLNLPEK</sequence>
<organism>
    <name type="scientific">Methylocella silvestris (strain DSM 15510 / CIP 108128 / LMG 27833 / NCIMB 13906 / BL2)</name>
    <dbReference type="NCBI Taxonomy" id="395965"/>
    <lineage>
        <taxon>Bacteria</taxon>
        <taxon>Pseudomonadati</taxon>
        <taxon>Pseudomonadota</taxon>
        <taxon>Alphaproteobacteria</taxon>
        <taxon>Hyphomicrobiales</taxon>
        <taxon>Beijerinckiaceae</taxon>
        <taxon>Methylocella</taxon>
    </lineage>
</organism>
<reference key="1">
    <citation type="journal article" date="2010" name="J. Bacteriol.">
        <title>Complete genome sequence of the aerobic facultative methanotroph Methylocella silvestris BL2.</title>
        <authorList>
            <person name="Chen Y."/>
            <person name="Crombie A."/>
            <person name="Rahman M.T."/>
            <person name="Dedysh S.N."/>
            <person name="Liesack W."/>
            <person name="Stott M.B."/>
            <person name="Alam M."/>
            <person name="Theisen A.R."/>
            <person name="Murrell J.C."/>
            <person name="Dunfield P.F."/>
        </authorList>
    </citation>
    <scope>NUCLEOTIDE SEQUENCE [LARGE SCALE GENOMIC DNA]</scope>
    <source>
        <strain>DSM 15510 / CIP 108128 / LMG 27833 / NCIMB 13906 / BL2</strain>
    </source>
</reference>
<feature type="chain" id="PRO_1000199000" description="Aspartate--tRNA(Asp/Asn) ligase">
    <location>
        <begin position="1"/>
        <end position="623"/>
    </location>
</feature>
<feature type="region of interest" description="Aspartate" evidence="1">
    <location>
        <begin position="199"/>
        <end position="202"/>
    </location>
</feature>
<feature type="binding site" evidence="1">
    <location>
        <position position="175"/>
    </location>
    <ligand>
        <name>L-aspartate</name>
        <dbReference type="ChEBI" id="CHEBI:29991"/>
    </ligand>
</feature>
<feature type="binding site" evidence="1">
    <location>
        <begin position="221"/>
        <end position="223"/>
    </location>
    <ligand>
        <name>ATP</name>
        <dbReference type="ChEBI" id="CHEBI:30616"/>
    </ligand>
</feature>
<feature type="binding site" evidence="1">
    <location>
        <position position="221"/>
    </location>
    <ligand>
        <name>L-aspartate</name>
        <dbReference type="ChEBI" id="CHEBI:29991"/>
    </ligand>
</feature>
<feature type="binding site" evidence="1">
    <location>
        <position position="455"/>
    </location>
    <ligand>
        <name>L-aspartate</name>
        <dbReference type="ChEBI" id="CHEBI:29991"/>
    </ligand>
</feature>
<feature type="binding site" evidence="1">
    <location>
        <position position="517"/>
    </location>
    <ligand>
        <name>ATP</name>
        <dbReference type="ChEBI" id="CHEBI:30616"/>
    </ligand>
</feature>
<feature type="binding site" evidence="1">
    <location>
        <position position="524"/>
    </location>
    <ligand>
        <name>L-aspartate</name>
        <dbReference type="ChEBI" id="CHEBI:29991"/>
    </ligand>
</feature>
<feature type="binding site" evidence="1">
    <location>
        <begin position="569"/>
        <end position="572"/>
    </location>
    <ligand>
        <name>ATP</name>
        <dbReference type="ChEBI" id="CHEBI:30616"/>
    </ligand>
</feature>
<feature type="site" description="Important for tRNA non-discrimination" evidence="1">
    <location>
        <position position="33"/>
    </location>
</feature>
<feature type="site" description="Important for tRNA non-discrimination" evidence="1">
    <location>
        <position position="83"/>
    </location>
</feature>
<name>SYDND_METSB</name>
<proteinExistence type="inferred from homology"/>
<accession>B8EN55</accession>
<comment type="function">
    <text evidence="1">Aspartyl-tRNA synthetase with relaxed tRNA specificity since it is able to aspartylate not only its cognate tRNA(Asp) but also tRNA(Asn). Reaction proceeds in two steps: L-aspartate is first activated by ATP to form Asp-AMP and then transferred to the acceptor end of tRNA(Asp/Asn).</text>
</comment>
<comment type="catalytic activity">
    <reaction evidence="1">
        <text>tRNA(Asx) + L-aspartate + ATP = L-aspartyl-tRNA(Asx) + AMP + diphosphate</text>
        <dbReference type="Rhea" id="RHEA:18349"/>
        <dbReference type="Rhea" id="RHEA-COMP:9710"/>
        <dbReference type="Rhea" id="RHEA-COMP:9711"/>
        <dbReference type="ChEBI" id="CHEBI:29991"/>
        <dbReference type="ChEBI" id="CHEBI:30616"/>
        <dbReference type="ChEBI" id="CHEBI:33019"/>
        <dbReference type="ChEBI" id="CHEBI:78442"/>
        <dbReference type="ChEBI" id="CHEBI:78516"/>
        <dbReference type="ChEBI" id="CHEBI:456215"/>
        <dbReference type="EC" id="6.1.1.23"/>
    </reaction>
</comment>
<comment type="subunit">
    <text evidence="1">Homodimer.</text>
</comment>
<comment type="subcellular location">
    <subcellularLocation>
        <location evidence="1">Cytoplasm</location>
    </subcellularLocation>
</comment>
<comment type="similarity">
    <text evidence="1">Belongs to the class-II aminoacyl-tRNA synthetase family. Type 1 subfamily.</text>
</comment>
<keyword id="KW-0030">Aminoacyl-tRNA synthetase</keyword>
<keyword id="KW-0067">ATP-binding</keyword>
<keyword id="KW-0963">Cytoplasm</keyword>
<keyword id="KW-0436">Ligase</keyword>
<keyword id="KW-0547">Nucleotide-binding</keyword>
<keyword id="KW-0648">Protein biosynthesis</keyword>
<keyword id="KW-1185">Reference proteome</keyword>
<dbReference type="EC" id="6.1.1.23" evidence="1"/>
<dbReference type="EMBL" id="CP001280">
    <property type="protein sequence ID" value="ACK49190.1"/>
    <property type="molecule type" value="Genomic_DNA"/>
</dbReference>
<dbReference type="RefSeq" id="WP_012589260.1">
    <property type="nucleotide sequence ID" value="NC_011666.1"/>
</dbReference>
<dbReference type="SMR" id="B8EN55"/>
<dbReference type="STRING" id="395965.Msil_0209"/>
<dbReference type="KEGG" id="msl:Msil_0209"/>
<dbReference type="eggNOG" id="COG0173">
    <property type="taxonomic scope" value="Bacteria"/>
</dbReference>
<dbReference type="HOGENOM" id="CLU_014330_3_2_5"/>
<dbReference type="OrthoDB" id="9802326at2"/>
<dbReference type="Proteomes" id="UP000002257">
    <property type="component" value="Chromosome"/>
</dbReference>
<dbReference type="GO" id="GO:0005737">
    <property type="term" value="C:cytoplasm"/>
    <property type="evidence" value="ECO:0007669"/>
    <property type="project" value="UniProtKB-SubCell"/>
</dbReference>
<dbReference type="GO" id="GO:0004815">
    <property type="term" value="F:aspartate-tRNA ligase activity"/>
    <property type="evidence" value="ECO:0007669"/>
    <property type="project" value="UniProtKB-UniRule"/>
</dbReference>
<dbReference type="GO" id="GO:0050560">
    <property type="term" value="F:aspartate-tRNA(Asn) ligase activity"/>
    <property type="evidence" value="ECO:0007669"/>
    <property type="project" value="UniProtKB-EC"/>
</dbReference>
<dbReference type="GO" id="GO:0005524">
    <property type="term" value="F:ATP binding"/>
    <property type="evidence" value="ECO:0007669"/>
    <property type="project" value="UniProtKB-UniRule"/>
</dbReference>
<dbReference type="GO" id="GO:0003676">
    <property type="term" value="F:nucleic acid binding"/>
    <property type="evidence" value="ECO:0007669"/>
    <property type="project" value="InterPro"/>
</dbReference>
<dbReference type="GO" id="GO:0006422">
    <property type="term" value="P:aspartyl-tRNA aminoacylation"/>
    <property type="evidence" value="ECO:0007669"/>
    <property type="project" value="UniProtKB-UniRule"/>
</dbReference>
<dbReference type="CDD" id="cd00777">
    <property type="entry name" value="AspRS_core"/>
    <property type="match status" value="1"/>
</dbReference>
<dbReference type="CDD" id="cd04317">
    <property type="entry name" value="EcAspRS_like_N"/>
    <property type="match status" value="1"/>
</dbReference>
<dbReference type="Gene3D" id="3.30.930.10">
    <property type="entry name" value="Bira Bifunctional Protein, Domain 2"/>
    <property type="match status" value="1"/>
</dbReference>
<dbReference type="Gene3D" id="3.30.1360.30">
    <property type="entry name" value="GAD-like domain"/>
    <property type="match status" value="1"/>
</dbReference>
<dbReference type="Gene3D" id="2.40.50.140">
    <property type="entry name" value="Nucleic acid-binding proteins"/>
    <property type="match status" value="1"/>
</dbReference>
<dbReference type="HAMAP" id="MF_00044">
    <property type="entry name" value="Asp_tRNA_synth_type1"/>
    <property type="match status" value="1"/>
</dbReference>
<dbReference type="InterPro" id="IPR004364">
    <property type="entry name" value="Aa-tRNA-synt_II"/>
</dbReference>
<dbReference type="InterPro" id="IPR006195">
    <property type="entry name" value="aa-tRNA-synth_II"/>
</dbReference>
<dbReference type="InterPro" id="IPR045864">
    <property type="entry name" value="aa-tRNA-synth_II/BPL/LPL"/>
</dbReference>
<dbReference type="InterPro" id="IPR004524">
    <property type="entry name" value="Asp-tRNA-ligase_1"/>
</dbReference>
<dbReference type="InterPro" id="IPR047089">
    <property type="entry name" value="Asp-tRNA-ligase_1_N"/>
</dbReference>
<dbReference type="InterPro" id="IPR002312">
    <property type="entry name" value="Asp/Asn-tRNA-synth_IIb"/>
</dbReference>
<dbReference type="InterPro" id="IPR047090">
    <property type="entry name" value="AspRS_core"/>
</dbReference>
<dbReference type="InterPro" id="IPR004115">
    <property type="entry name" value="GAD-like_sf"/>
</dbReference>
<dbReference type="InterPro" id="IPR029351">
    <property type="entry name" value="GAD_dom"/>
</dbReference>
<dbReference type="InterPro" id="IPR012340">
    <property type="entry name" value="NA-bd_OB-fold"/>
</dbReference>
<dbReference type="InterPro" id="IPR004365">
    <property type="entry name" value="NA-bd_OB_tRNA"/>
</dbReference>
<dbReference type="NCBIfam" id="TIGR00459">
    <property type="entry name" value="aspS_bact"/>
    <property type="match status" value="1"/>
</dbReference>
<dbReference type="NCBIfam" id="NF001750">
    <property type="entry name" value="PRK00476.1"/>
    <property type="match status" value="1"/>
</dbReference>
<dbReference type="PANTHER" id="PTHR22594:SF5">
    <property type="entry name" value="ASPARTATE--TRNA LIGASE, MITOCHONDRIAL"/>
    <property type="match status" value="1"/>
</dbReference>
<dbReference type="PANTHER" id="PTHR22594">
    <property type="entry name" value="ASPARTYL/LYSYL-TRNA SYNTHETASE"/>
    <property type="match status" value="1"/>
</dbReference>
<dbReference type="Pfam" id="PF02938">
    <property type="entry name" value="GAD"/>
    <property type="match status" value="1"/>
</dbReference>
<dbReference type="Pfam" id="PF00152">
    <property type="entry name" value="tRNA-synt_2"/>
    <property type="match status" value="1"/>
</dbReference>
<dbReference type="Pfam" id="PF01336">
    <property type="entry name" value="tRNA_anti-codon"/>
    <property type="match status" value="1"/>
</dbReference>
<dbReference type="PRINTS" id="PR01042">
    <property type="entry name" value="TRNASYNTHASP"/>
</dbReference>
<dbReference type="SUPFAM" id="SSF55681">
    <property type="entry name" value="Class II aaRS and biotin synthetases"/>
    <property type="match status" value="1"/>
</dbReference>
<dbReference type="SUPFAM" id="SSF55261">
    <property type="entry name" value="GAD domain-like"/>
    <property type="match status" value="1"/>
</dbReference>
<dbReference type="SUPFAM" id="SSF50249">
    <property type="entry name" value="Nucleic acid-binding proteins"/>
    <property type="match status" value="1"/>
</dbReference>
<dbReference type="PROSITE" id="PS50862">
    <property type="entry name" value="AA_TRNA_LIGASE_II"/>
    <property type="match status" value="1"/>
</dbReference>
<protein>
    <recommendedName>
        <fullName evidence="1">Aspartate--tRNA(Asp/Asn) ligase</fullName>
        <ecNumber evidence="1">6.1.1.23</ecNumber>
    </recommendedName>
    <alternativeName>
        <fullName evidence="1">Aspartyl-tRNA synthetase</fullName>
        <shortName evidence="1">AspRS</shortName>
    </alternativeName>
    <alternativeName>
        <fullName evidence="1">Non-discriminating aspartyl-tRNA synthetase</fullName>
        <shortName evidence="1">ND-AspRS</shortName>
    </alternativeName>
</protein>
<evidence type="ECO:0000255" key="1">
    <source>
        <dbReference type="HAMAP-Rule" id="MF_00044"/>
    </source>
</evidence>